<reference evidence="7" key="1">
    <citation type="journal article" date="1998" name="Science">
        <title>Genome sequence of the nematode C. elegans: a platform for investigating biology.</title>
        <authorList>
            <consortium name="The C. elegans sequencing consortium"/>
        </authorList>
    </citation>
    <scope>NUCLEOTIDE SEQUENCE [LARGE SCALE GENOMIC DNA]</scope>
    <source>
        <strain evidence="7">Bristol N2</strain>
    </source>
</reference>
<reference evidence="6" key="2">
    <citation type="journal article" date="2003" name="Development">
        <title>lin-35/Rb and ubc-18, an E2 ubiquitin-conjugating enzyme, function redundantly to control pharyngeal morphogenesis in C. elegans.</title>
        <authorList>
            <person name="Fay D.S."/>
            <person name="Large E."/>
            <person name="Han M."/>
            <person name="Darland M."/>
        </authorList>
    </citation>
    <scope>FUNCTION</scope>
    <scope>DISRUPTION PHENOTYPE</scope>
    <scope>MUTAGENESIS OF GLU-10</scope>
</reference>
<reference evidence="6" key="3">
    <citation type="journal article" date="2006" name="Dev. Biol.">
        <title>ARI-1, an RBR family ubiquitin-ligase, functions with UBC-18 to regulate pharyngeal development in C. elegans.</title>
        <authorList>
            <person name="Qiu X."/>
            <person name="Fay D.S."/>
        </authorList>
    </citation>
    <scope>INTERACTION WITH ARI-1.1</scope>
</reference>
<reference evidence="6" key="4">
    <citation type="journal article" date="2009" name="Nature">
        <title>A conserved ubiquitination pathway determines longevity in response to diet restriction.</title>
        <authorList>
            <person name="Carrano A.C."/>
            <person name="Liu Z."/>
            <person name="Dillin A."/>
            <person name="Hunter T."/>
        </authorList>
    </citation>
    <scope>FUNCTION</scope>
    <scope>CATALYTIC ACTIVITY</scope>
    <scope>INTERACTION WITH WWP-1</scope>
    <scope>TISSUE SPECIFICITY</scope>
    <scope>DISRUPTION PHENOTYPE</scope>
    <scope>MUTAGENESIS OF GLU-10</scope>
</reference>
<reference key="5">
    <citation type="journal article" date="2009" name="PLoS Genet.">
        <title>A mechanistic basis for the coordinated regulation of pharyngeal morphogenesis in Caenorhabditis elegans by LIN-35/Rb and UBC-18-ARI-1.</title>
        <authorList>
            <person name="Mani K."/>
            <person name="Fay D.S."/>
        </authorList>
    </citation>
    <scope>FUNCTION</scope>
    <scope>DISRUPTION PHENOTYPE</scope>
</reference>
<sequence>MSATRRLQKELGDLKNCGVKAYENVECEETNLLKWTVLLIPDKEPYNKGAFKVGITFPVDYPFKPPKVAFETKIYHPNVDEEGKFCLPIVTAENWKPATKTEQVMMALLSLINEPEPSHPIRADVAEEFQKDHKKFMKTAEEHTRKHAEKRPE</sequence>
<comment type="function">
    <text evidence="2 4 5">Ubiquitin-conjugating enzyme E2 (PubMed:19553937). Accepts ubiquitin from the E1 complex and catalyzes its covalent attachment to other proteins (PubMed:19553937). Required for diet restriction-mediated lifespan extension, probably acting as part of a complex with ubiquitin-protein ligase wwp-1 (PubMed:19553937). Acts redundantly with lin-35/Rb in the regulation of pharyngeal morphogenesis during embryonic development by negatively regulating the expression of proteins such as sup-35 (PubMed:12783801, PubMed:19521497).</text>
</comment>
<comment type="catalytic activity">
    <reaction evidence="5">
        <text>S-ubiquitinyl-[E1 ubiquitin-activating enzyme]-L-cysteine + [E2 ubiquitin-conjugating enzyme]-L-cysteine = [E1 ubiquitin-activating enzyme]-L-cysteine + S-ubiquitinyl-[E2 ubiquitin-conjugating enzyme]-L-cysteine.</text>
        <dbReference type="EC" id="2.3.2.23"/>
    </reaction>
</comment>
<comment type="subunit">
    <text evidence="3 5">Interacts with E3 ubiquitin-protein ligase wwp-1 (PubMed:19553937). Interacts with RBR-type E3 ubiquitin transferase ari-1.1 (PubMed:16457801).</text>
</comment>
<comment type="interaction">
    <interactant intactId="EBI-325980">
        <id>Q21633</id>
    </interactant>
    <interactant intactId="EBI-317369">
        <id>Q9N2Z7</id>
        <label>wwp-1</label>
    </interactant>
    <organismsDiffer>false</organismsDiffer>
    <experiments>3</experiments>
</comment>
<comment type="tissue specificity">
    <text evidence="5">Expressed in neurons localized in the head and tail of adults.</text>
</comment>
<comment type="disruption phenotype">
    <text evidence="2 4 5">RNAi-mediated knockdown very slightly reduces viability and brood size; phenotype is exacerbated on a mutant background which enhances the overall efficacy of RNAi (PubMed:12783801). Increases sensitivity to paraquat and reduces lifespan at 25 degrees Celsius, but not at 20 degrees Celsius (PubMed:19553937). Abolishes lifespan extension completely on an eat-2 mutant background (PubMed:19553937). Substantially increases embryonic expression of sup-35 (PubMed:19521497).</text>
</comment>
<comment type="similarity">
    <text evidence="1">Belongs to the ubiquitin-conjugating enzyme family.</text>
</comment>
<gene>
    <name evidence="8" type="primary">ubc-18</name>
    <name evidence="8" type="ORF">R01H2.6</name>
</gene>
<name>UBC18_CAEEL</name>
<protein>
    <recommendedName>
        <fullName evidence="6">Ubiquitin-conjugating enzyme E2 ubc-18</fullName>
        <ecNumber evidence="5">2.3.2.23</ecNumber>
    </recommendedName>
</protein>
<feature type="chain" id="PRO_0000452645" description="Ubiquitin-conjugating enzyme E2 ubc-18">
    <location>
        <begin position="1"/>
        <end position="153"/>
    </location>
</feature>
<feature type="domain" description="UBC core" evidence="1">
    <location>
        <begin position="2"/>
        <end position="149"/>
    </location>
</feature>
<feature type="active site" description="Glycyl thioester intermediate" evidence="1">
    <location>
        <position position="86"/>
    </location>
</feature>
<feature type="mutagenesis site" description="In ku354; drastically reduces wwp-1-dependent ubiquitin ligase activity. Marked reduction in brood size. On a lin-35 mutant background, 4% of larvae display a Pun (pharyngeal unattached) phenotype, whereby the pharynx fails to elongate and form an attachment to the anterior alimentary opening or buccal cavity. Increases to 40% Pun phenotype animals on a lin-35 mutant background combined with RNAi-mediated knockdown." evidence="2 5">
    <original>E</original>
    <variation>K</variation>
    <location>
        <position position="10"/>
    </location>
</feature>
<proteinExistence type="evidence at protein level"/>
<organism evidence="7">
    <name type="scientific">Caenorhabditis elegans</name>
    <dbReference type="NCBI Taxonomy" id="6239"/>
    <lineage>
        <taxon>Eukaryota</taxon>
        <taxon>Metazoa</taxon>
        <taxon>Ecdysozoa</taxon>
        <taxon>Nematoda</taxon>
        <taxon>Chromadorea</taxon>
        <taxon>Rhabditida</taxon>
        <taxon>Rhabditina</taxon>
        <taxon>Rhabditomorpha</taxon>
        <taxon>Rhabditoidea</taxon>
        <taxon>Rhabditidae</taxon>
        <taxon>Peloderinae</taxon>
        <taxon>Caenorhabditis</taxon>
    </lineage>
</organism>
<accession>Q21633</accession>
<evidence type="ECO:0000255" key="1">
    <source>
        <dbReference type="PROSITE-ProRule" id="PRU00388"/>
    </source>
</evidence>
<evidence type="ECO:0000269" key="2">
    <source>
    </source>
</evidence>
<evidence type="ECO:0000269" key="3">
    <source>
    </source>
</evidence>
<evidence type="ECO:0000269" key="4">
    <source>
    </source>
</evidence>
<evidence type="ECO:0000269" key="5">
    <source>
    </source>
</evidence>
<evidence type="ECO:0000305" key="6"/>
<evidence type="ECO:0000312" key="7">
    <source>
        <dbReference type="Proteomes" id="UP000001940"/>
    </source>
</evidence>
<evidence type="ECO:0000312" key="8">
    <source>
        <dbReference type="WormBase" id="R01H2.6"/>
    </source>
</evidence>
<keyword id="KW-1185">Reference proteome</keyword>
<keyword id="KW-0808">Transferase</keyword>
<keyword id="KW-0833">Ubl conjugation pathway</keyword>
<dbReference type="EC" id="2.3.2.23" evidence="5"/>
<dbReference type="EMBL" id="BX284603">
    <property type="protein sequence ID" value="CCD69287.1"/>
    <property type="molecule type" value="Genomic_DNA"/>
</dbReference>
<dbReference type="PIR" id="T16646">
    <property type="entry name" value="T16646"/>
</dbReference>
<dbReference type="RefSeq" id="NP_498541.1">
    <property type="nucleotide sequence ID" value="NM_066140.7"/>
</dbReference>
<dbReference type="SMR" id="Q21633"/>
<dbReference type="DIP" id="DIP-26820N"/>
<dbReference type="FunCoup" id="Q21633">
    <property type="interactions" value="2511"/>
</dbReference>
<dbReference type="IntAct" id="Q21633">
    <property type="interactions" value="6"/>
</dbReference>
<dbReference type="STRING" id="6239.R01H2.6.1"/>
<dbReference type="PaxDb" id="6239-R01H2.6"/>
<dbReference type="PeptideAtlas" id="Q21633"/>
<dbReference type="EnsemblMetazoa" id="R01H2.6.1">
    <property type="protein sequence ID" value="R01H2.6.1"/>
    <property type="gene ID" value="WBGene00006713"/>
</dbReference>
<dbReference type="GeneID" id="175985"/>
<dbReference type="KEGG" id="cel:CELE_R01H2.6"/>
<dbReference type="UCSC" id="R01H2.6">
    <property type="organism name" value="c. elegans"/>
</dbReference>
<dbReference type="AGR" id="WB:WBGene00006713"/>
<dbReference type="CTD" id="175985"/>
<dbReference type="WormBase" id="R01H2.6">
    <property type="protein sequence ID" value="CE25067"/>
    <property type="gene ID" value="WBGene00006713"/>
    <property type="gene designation" value="ubc-18"/>
</dbReference>
<dbReference type="eggNOG" id="KOG0422">
    <property type="taxonomic scope" value="Eukaryota"/>
</dbReference>
<dbReference type="GeneTree" id="ENSGT00940000165322"/>
<dbReference type="HOGENOM" id="CLU_030988_13_3_1"/>
<dbReference type="InParanoid" id="Q21633"/>
<dbReference type="OMA" id="TMNKRLV"/>
<dbReference type="OrthoDB" id="9973183at2759"/>
<dbReference type="PhylomeDB" id="Q21633"/>
<dbReference type="BRENDA" id="2.3.2.23">
    <property type="organism ID" value="1045"/>
</dbReference>
<dbReference type="Reactome" id="R-CEL-1169408">
    <property type="pathway name" value="ISG15 antiviral mechanism"/>
</dbReference>
<dbReference type="Reactome" id="R-CEL-8866652">
    <property type="pathway name" value="Synthesis of active ubiquitin: roles of E1 and E2 enzymes"/>
</dbReference>
<dbReference type="Reactome" id="R-CEL-936440">
    <property type="pathway name" value="Negative regulators of DDX58/IFIH1 signaling"/>
</dbReference>
<dbReference type="Reactome" id="R-CEL-983168">
    <property type="pathway name" value="Antigen processing: Ubiquitination &amp; Proteasome degradation"/>
</dbReference>
<dbReference type="Reactome" id="R-CEL-9833482">
    <property type="pathway name" value="PKR-mediated signaling"/>
</dbReference>
<dbReference type="Reactome" id="R-CEL-9909505">
    <property type="pathway name" value="Modulation of host responses by IFN-stimulated genes"/>
</dbReference>
<dbReference type="SignaLink" id="Q21633"/>
<dbReference type="PRO" id="PR:Q21633"/>
<dbReference type="Proteomes" id="UP000001940">
    <property type="component" value="Chromosome III"/>
</dbReference>
<dbReference type="Bgee" id="WBGene00006713">
    <property type="expression patterns" value="Expressed in embryo and 4 other cell types or tissues"/>
</dbReference>
<dbReference type="GO" id="GO:0005634">
    <property type="term" value="C:nucleus"/>
    <property type="evidence" value="ECO:0000318"/>
    <property type="project" value="GO_Central"/>
</dbReference>
<dbReference type="GO" id="GO:0061631">
    <property type="term" value="F:ubiquitin conjugating enzyme activity"/>
    <property type="evidence" value="ECO:0000314"/>
    <property type="project" value="WormBase"/>
</dbReference>
<dbReference type="GO" id="GO:0031625">
    <property type="term" value="F:ubiquitin protein ligase binding"/>
    <property type="evidence" value="ECO:0000353"/>
    <property type="project" value="WormBase"/>
</dbReference>
<dbReference type="GO" id="GO:0009887">
    <property type="term" value="P:animal organ morphogenesis"/>
    <property type="evidence" value="ECO:0000316"/>
    <property type="project" value="UniProtKB"/>
</dbReference>
<dbReference type="GO" id="GO:0008340">
    <property type="term" value="P:determination of adult lifespan"/>
    <property type="evidence" value="ECO:0000315"/>
    <property type="project" value="WormBase"/>
</dbReference>
<dbReference type="GO" id="GO:0048557">
    <property type="term" value="P:embryonic digestive tract morphogenesis"/>
    <property type="evidence" value="ECO:0000316"/>
    <property type="project" value="WormBase"/>
</dbReference>
<dbReference type="GO" id="GO:0000209">
    <property type="term" value="P:protein polyubiquitination"/>
    <property type="evidence" value="ECO:0000318"/>
    <property type="project" value="GO_Central"/>
</dbReference>
<dbReference type="GO" id="GO:0016567">
    <property type="term" value="P:protein ubiquitination"/>
    <property type="evidence" value="ECO:0000314"/>
    <property type="project" value="WormBase"/>
</dbReference>
<dbReference type="GO" id="GO:0006511">
    <property type="term" value="P:ubiquitin-dependent protein catabolic process"/>
    <property type="evidence" value="ECO:0000314"/>
    <property type="project" value="WormBase"/>
</dbReference>
<dbReference type="CDD" id="cd23801">
    <property type="entry name" value="UBCc_UBE2L3"/>
    <property type="match status" value="1"/>
</dbReference>
<dbReference type="FunFam" id="3.10.110.10:FF:000011">
    <property type="entry name" value="Ubiquitin-conjugating enzyme E2 L3"/>
    <property type="match status" value="1"/>
</dbReference>
<dbReference type="Gene3D" id="3.10.110.10">
    <property type="entry name" value="Ubiquitin Conjugating Enzyme"/>
    <property type="match status" value="1"/>
</dbReference>
<dbReference type="InterPro" id="IPR050113">
    <property type="entry name" value="Ub_conjugating_enzyme"/>
</dbReference>
<dbReference type="InterPro" id="IPR000608">
    <property type="entry name" value="UBQ-conjugat_E2_core"/>
</dbReference>
<dbReference type="InterPro" id="IPR016135">
    <property type="entry name" value="UBQ-conjugating_enzyme/RWD"/>
</dbReference>
<dbReference type="PANTHER" id="PTHR24067">
    <property type="entry name" value="UBIQUITIN-CONJUGATING ENZYME E2"/>
    <property type="match status" value="1"/>
</dbReference>
<dbReference type="Pfam" id="PF00179">
    <property type="entry name" value="UQ_con"/>
    <property type="match status" value="1"/>
</dbReference>
<dbReference type="SMART" id="SM00212">
    <property type="entry name" value="UBCc"/>
    <property type="match status" value="1"/>
</dbReference>
<dbReference type="SUPFAM" id="SSF54495">
    <property type="entry name" value="UBC-like"/>
    <property type="match status" value="1"/>
</dbReference>
<dbReference type="PROSITE" id="PS50127">
    <property type="entry name" value="UBC_2"/>
    <property type="match status" value="1"/>
</dbReference>